<gene>
    <name evidence="1" type="primary">plsX</name>
    <name type="ordered locus">MAG4400</name>
</gene>
<reference key="1">
    <citation type="journal article" date="2007" name="PLoS Genet.">
        <title>Being pathogenic, plastic, and sexual while living with a nearly minimal bacterial genome.</title>
        <authorList>
            <person name="Sirand-Pugnet P."/>
            <person name="Lartigue C."/>
            <person name="Marenda M."/>
            <person name="Jacob D."/>
            <person name="Barre A."/>
            <person name="Barbe V."/>
            <person name="Schenowitz C."/>
            <person name="Mangenot S."/>
            <person name="Couloux A."/>
            <person name="Segurens B."/>
            <person name="de Daruvar A."/>
            <person name="Blanchard A."/>
            <person name="Citti C."/>
        </authorList>
    </citation>
    <scope>NUCLEOTIDE SEQUENCE [LARGE SCALE GENOMIC DNA]</scope>
    <source>
        <strain>NCTC 10123 / CIP 59.7 / PG2</strain>
    </source>
</reference>
<feature type="chain" id="PRO_1000089923" description="Phosphate acyltransferase">
    <location>
        <begin position="1"/>
        <end position="334"/>
    </location>
</feature>
<evidence type="ECO:0000255" key="1">
    <source>
        <dbReference type="HAMAP-Rule" id="MF_00019"/>
    </source>
</evidence>
<dbReference type="EC" id="2.3.1.274" evidence="1"/>
<dbReference type="EMBL" id="CU179680">
    <property type="protein sequence ID" value="CAL59138.1"/>
    <property type="molecule type" value="Genomic_DNA"/>
</dbReference>
<dbReference type="RefSeq" id="WP_011949609.1">
    <property type="nucleotide sequence ID" value="NC_009497.1"/>
</dbReference>
<dbReference type="SMR" id="A5IYM9"/>
<dbReference type="STRING" id="347257.MAG4400"/>
<dbReference type="GeneID" id="93358181"/>
<dbReference type="KEGG" id="maa:MAG4400"/>
<dbReference type="HOGENOM" id="CLU_039379_1_1_14"/>
<dbReference type="UniPathway" id="UPA00085"/>
<dbReference type="Proteomes" id="UP000007065">
    <property type="component" value="Chromosome"/>
</dbReference>
<dbReference type="GO" id="GO:0005737">
    <property type="term" value="C:cytoplasm"/>
    <property type="evidence" value="ECO:0007669"/>
    <property type="project" value="UniProtKB-SubCell"/>
</dbReference>
<dbReference type="GO" id="GO:0043811">
    <property type="term" value="F:phosphate:acyl-[acyl carrier protein] acyltransferase activity"/>
    <property type="evidence" value="ECO:0007669"/>
    <property type="project" value="UniProtKB-UniRule"/>
</dbReference>
<dbReference type="GO" id="GO:0006633">
    <property type="term" value="P:fatty acid biosynthetic process"/>
    <property type="evidence" value="ECO:0007669"/>
    <property type="project" value="UniProtKB-UniRule"/>
</dbReference>
<dbReference type="GO" id="GO:0008654">
    <property type="term" value="P:phospholipid biosynthetic process"/>
    <property type="evidence" value="ECO:0007669"/>
    <property type="project" value="UniProtKB-KW"/>
</dbReference>
<dbReference type="Gene3D" id="3.40.718.10">
    <property type="entry name" value="Isopropylmalate Dehydrogenase"/>
    <property type="match status" value="1"/>
</dbReference>
<dbReference type="HAMAP" id="MF_00019">
    <property type="entry name" value="PlsX"/>
    <property type="match status" value="1"/>
</dbReference>
<dbReference type="InterPro" id="IPR003664">
    <property type="entry name" value="FA_synthesis"/>
</dbReference>
<dbReference type="InterPro" id="IPR012281">
    <property type="entry name" value="Phospholipid_synth_PlsX-like"/>
</dbReference>
<dbReference type="NCBIfam" id="TIGR00182">
    <property type="entry name" value="plsX"/>
    <property type="match status" value="1"/>
</dbReference>
<dbReference type="PANTHER" id="PTHR30100">
    <property type="entry name" value="FATTY ACID/PHOSPHOLIPID SYNTHESIS PROTEIN PLSX"/>
    <property type="match status" value="1"/>
</dbReference>
<dbReference type="PANTHER" id="PTHR30100:SF1">
    <property type="entry name" value="PHOSPHATE ACYLTRANSFERASE"/>
    <property type="match status" value="1"/>
</dbReference>
<dbReference type="Pfam" id="PF02504">
    <property type="entry name" value="FA_synthesis"/>
    <property type="match status" value="1"/>
</dbReference>
<dbReference type="PIRSF" id="PIRSF002465">
    <property type="entry name" value="Phsphlp_syn_PlsX"/>
    <property type="match status" value="1"/>
</dbReference>
<dbReference type="SUPFAM" id="SSF53659">
    <property type="entry name" value="Isocitrate/Isopropylmalate dehydrogenase-like"/>
    <property type="match status" value="1"/>
</dbReference>
<protein>
    <recommendedName>
        <fullName evidence="1">Phosphate acyltransferase</fullName>
        <ecNumber evidence="1">2.3.1.274</ecNumber>
    </recommendedName>
    <alternativeName>
        <fullName evidence="1">Acyl-ACP phosphotransacylase</fullName>
    </alternativeName>
    <alternativeName>
        <fullName evidence="1">Acyl-[acyl-carrier-protein]--phosphate acyltransferase</fullName>
    </alternativeName>
    <alternativeName>
        <fullName evidence="1">Phosphate-acyl-ACP acyltransferase</fullName>
    </alternativeName>
</protein>
<comment type="function">
    <text evidence="1">Catalyzes the reversible formation of acyl-phosphate (acyl-PO(4)) from acyl-[acyl-carrier-protein] (acyl-ACP). This enzyme utilizes acyl-ACP as fatty acyl donor, but not acyl-CoA.</text>
</comment>
<comment type="catalytic activity">
    <reaction evidence="1">
        <text>a fatty acyl-[ACP] + phosphate = an acyl phosphate + holo-[ACP]</text>
        <dbReference type="Rhea" id="RHEA:42292"/>
        <dbReference type="Rhea" id="RHEA-COMP:9685"/>
        <dbReference type="Rhea" id="RHEA-COMP:14125"/>
        <dbReference type="ChEBI" id="CHEBI:43474"/>
        <dbReference type="ChEBI" id="CHEBI:59918"/>
        <dbReference type="ChEBI" id="CHEBI:64479"/>
        <dbReference type="ChEBI" id="CHEBI:138651"/>
        <dbReference type="EC" id="2.3.1.274"/>
    </reaction>
</comment>
<comment type="pathway">
    <text evidence="1">Lipid metabolism; phospholipid metabolism.</text>
</comment>
<comment type="subunit">
    <text evidence="1">Homodimer. Probably interacts with PlsY.</text>
</comment>
<comment type="subcellular location">
    <subcellularLocation>
        <location evidence="1">Cytoplasm</location>
    </subcellularLocation>
    <text evidence="1">Associated with the membrane possibly through PlsY.</text>
</comment>
<comment type="similarity">
    <text evidence="1">Belongs to the PlsX family.</text>
</comment>
<accession>A5IYM9</accession>
<organism>
    <name type="scientific">Mycoplasmopsis agalactiae (strain NCTC 10123 / CIP 59.7 / PG2)</name>
    <name type="common">Mycoplasma agalactiae</name>
    <dbReference type="NCBI Taxonomy" id="347257"/>
    <lineage>
        <taxon>Bacteria</taxon>
        <taxon>Bacillati</taxon>
        <taxon>Mycoplasmatota</taxon>
        <taxon>Mycoplasmoidales</taxon>
        <taxon>Metamycoplasmataceae</taxon>
        <taxon>Mycoplasmopsis</taxon>
    </lineage>
</organism>
<name>PLSX_MYCAP</name>
<sequence length="334" mass="36820">MYRIAFDVNGNDNGVAAAVKASCQFLKENDNYEIILVGDEALINNELKLIENIPNSLKIINNPNVPSDVKNFHKSLRENTSMNDSIDLVAQGKADAVISSGDSGTYLACATFKLKRLQGVSRSAFMPLMPTIVGRKFLLLDVGANIECKSEYLVEWAKIANVYARTLLNIVNPRVSLINIGTEDYKGLEIVKEAAKELKDNKFINYIGYSEPRYLLDGVADVAVIDGYGGNLVLKSLEGAILSFKNLLKDKIMAKPIRKFGYLFLKGAFQDVAETLDYRNVGAAWLIGLNGLSIKCHGNSDSKAYLGALNQIKLVIKNNVLEAIKKELNDKPHE</sequence>
<keyword id="KW-0963">Cytoplasm</keyword>
<keyword id="KW-0444">Lipid biosynthesis</keyword>
<keyword id="KW-0443">Lipid metabolism</keyword>
<keyword id="KW-0594">Phospholipid biosynthesis</keyword>
<keyword id="KW-1208">Phospholipid metabolism</keyword>
<keyword id="KW-1185">Reference proteome</keyword>
<keyword id="KW-0808">Transferase</keyword>
<proteinExistence type="inferred from homology"/>